<evidence type="ECO:0000250" key="1"/>
<evidence type="ECO:0000305" key="2"/>
<protein>
    <recommendedName>
        <fullName>Phosphoglycerate kinase</fullName>
        <ecNumber>2.7.2.3</ecNumber>
    </recommendedName>
</protein>
<proteinExistence type="inferred from homology"/>
<name>PGK_MYCPU</name>
<comment type="catalytic activity">
    <reaction>
        <text>(2R)-3-phosphoglycerate + ATP = (2R)-3-phospho-glyceroyl phosphate + ADP</text>
        <dbReference type="Rhea" id="RHEA:14801"/>
        <dbReference type="ChEBI" id="CHEBI:30616"/>
        <dbReference type="ChEBI" id="CHEBI:57604"/>
        <dbReference type="ChEBI" id="CHEBI:58272"/>
        <dbReference type="ChEBI" id="CHEBI:456216"/>
        <dbReference type="EC" id="2.7.2.3"/>
    </reaction>
</comment>
<comment type="pathway">
    <text>Carbohydrate degradation; glycolysis; pyruvate from D-glyceraldehyde 3-phosphate: step 2/5.</text>
</comment>
<comment type="subunit">
    <text evidence="1">Monomer.</text>
</comment>
<comment type="subcellular location">
    <subcellularLocation>
        <location evidence="2">Cytoplasm</location>
    </subcellularLocation>
</comment>
<comment type="similarity">
    <text evidence="2">In the N-terminal section; belongs to the phosphoglycerate kinase family.</text>
</comment>
<feature type="chain" id="PRO_0000145972" description="Phosphoglycerate kinase">
    <location>
        <begin position="1"/>
        <end position="771"/>
    </location>
</feature>
<feature type="region of interest" description="Phosphoglycerate kinase">
    <location>
        <begin position="1"/>
        <end position="406"/>
    </location>
</feature>
<feature type="region of interest" description="Unknown">
    <location>
        <begin position="407"/>
        <end position="771"/>
    </location>
</feature>
<feature type="binding site" evidence="1">
    <location>
        <begin position="20"/>
        <end position="22"/>
    </location>
    <ligand>
        <name>substrate</name>
    </ligand>
</feature>
<feature type="binding site" evidence="1">
    <location>
        <position position="35"/>
    </location>
    <ligand>
        <name>substrate</name>
    </ligand>
</feature>
<feature type="binding site" evidence="1">
    <location>
        <begin position="58"/>
        <end position="61"/>
    </location>
    <ligand>
        <name>substrate</name>
    </ligand>
</feature>
<feature type="binding site" evidence="1">
    <location>
        <position position="118"/>
    </location>
    <ligand>
        <name>substrate</name>
    </ligand>
</feature>
<feature type="binding site" evidence="1">
    <location>
        <position position="155"/>
    </location>
    <ligand>
        <name>substrate</name>
    </ligand>
</feature>
<feature type="binding site" evidence="1">
    <location>
        <position position="206"/>
    </location>
    <ligand>
        <name>ATP</name>
        <dbReference type="ChEBI" id="CHEBI:30616"/>
    </ligand>
</feature>
<feature type="binding site" evidence="1">
    <location>
        <position position="295"/>
    </location>
    <ligand>
        <name>ATP</name>
        <dbReference type="ChEBI" id="CHEBI:30616"/>
    </ligand>
</feature>
<feature type="binding site" evidence="1">
    <location>
        <position position="334"/>
    </location>
    <ligand>
        <name>ATP</name>
        <dbReference type="ChEBI" id="CHEBI:30616"/>
    </ligand>
</feature>
<feature type="binding site" evidence="1">
    <location>
        <begin position="361"/>
        <end position="364"/>
    </location>
    <ligand>
        <name>ATP</name>
        <dbReference type="ChEBI" id="CHEBI:30616"/>
    </ligand>
</feature>
<keyword id="KW-0067">ATP-binding</keyword>
<keyword id="KW-0963">Cytoplasm</keyword>
<keyword id="KW-0324">Glycolysis</keyword>
<keyword id="KW-0418">Kinase</keyword>
<keyword id="KW-0547">Nucleotide-binding</keyword>
<keyword id="KW-1185">Reference proteome</keyword>
<keyword id="KW-0808">Transferase</keyword>
<gene>
    <name type="primary">pgk</name>
    <name type="ordered locus">MYPU_2460</name>
</gene>
<sequence length="771" mass="86689">MKKLITDLNLNDKKVLIRLDLNVPLKGKKITSLKRIEESIPTIKYVQERGGKIILLSHLGRVKTKEDKEKKSLSIVVEALASLLNSPVKFVDQTRGKKLESAIEKLKPGDVLLIENTRFEDLNNNAESNNDPELGKYWASLGDVFINDAFGTAHRAHASNVGIASNIKESALGILVQKEVNALWKLMEQQEKPFVAILGGSKVSDKINVLEKIIDKVDRLIIGGAMAYTFLKAQGIGIGDSIYEQDKIEFATEFLKKYNHKIILPIDHALAKKFKNAKPIFNNENPLEIPQTFIGMDVGPKTIELIHKYIKGDTKLGISPAKTIFWNGPMGVTEFEEFQSGSLAVVEAISQLVGAYSVVGGGDSIAIIEKLNAQMLFSHISTGGGASLEFIESKVLPGIDAIQNYEQTYEQYDSQVQSQDFSQNFDSPLVEETFSQSTSENFSDFASSTQEHFATSENQNTLINNYENPGFDSQDMFKTEEQNDSTSSFLTSTNPFSSEFSNEFKTSDFQDLKQTQETETQETLIPHTFEYTTDDLRHTLEQYVRETSFQTRESTFPTEEASFETLEETSFQTLEESFPTQSFEQVEQTSEKNMEVSTENFENASSQTNSFTVSDIPKTTSTFEDLETPETQNTTLEEVALETSNFEAQNLETPNLQTSNFETSNLETSNFETSNFETSTFESFNTGNFSTPSSTFEDLDLQSATFQTNDESERSTQENFEPTEVIESDLLAMKTTELEQEITNNTSRDILSEDEVAAPHKKRFWFFGRKR</sequence>
<dbReference type="EC" id="2.7.2.3"/>
<dbReference type="EMBL" id="AL445563">
    <property type="protein sequence ID" value="CAC13419.1"/>
    <property type="molecule type" value="Genomic_DNA"/>
</dbReference>
<dbReference type="PIR" id="F90542">
    <property type="entry name" value="F90542"/>
</dbReference>
<dbReference type="SMR" id="Q98QW4"/>
<dbReference type="STRING" id="272635.gene:17576834"/>
<dbReference type="KEGG" id="mpu:MYPU_2460"/>
<dbReference type="eggNOG" id="COG0126">
    <property type="taxonomic scope" value="Bacteria"/>
</dbReference>
<dbReference type="HOGENOM" id="CLU_362403_0_0_14"/>
<dbReference type="UniPathway" id="UPA00109">
    <property type="reaction ID" value="UER00185"/>
</dbReference>
<dbReference type="Proteomes" id="UP000000528">
    <property type="component" value="Chromosome"/>
</dbReference>
<dbReference type="GO" id="GO:0005829">
    <property type="term" value="C:cytosol"/>
    <property type="evidence" value="ECO:0007669"/>
    <property type="project" value="TreeGrafter"/>
</dbReference>
<dbReference type="GO" id="GO:0043531">
    <property type="term" value="F:ADP binding"/>
    <property type="evidence" value="ECO:0007669"/>
    <property type="project" value="TreeGrafter"/>
</dbReference>
<dbReference type="GO" id="GO:0005524">
    <property type="term" value="F:ATP binding"/>
    <property type="evidence" value="ECO:0007669"/>
    <property type="project" value="UniProtKB-KW"/>
</dbReference>
<dbReference type="GO" id="GO:0004618">
    <property type="term" value="F:phosphoglycerate kinase activity"/>
    <property type="evidence" value="ECO:0007669"/>
    <property type="project" value="UniProtKB-UniRule"/>
</dbReference>
<dbReference type="GO" id="GO:0006094">
    <property type="term" value="P:gluconeogenesis"/>
    <property type="evidence" value="ECO:0007669"/>
    <property type="project" value="TreeGrafter"/>
</dbReference>
<dbReference type="GO" id="GO:0006096">
    <property type="term" value="P:glycolytic process"/>
    <property type="evidence" value="ECO:0007669"/>
    <property type="project" value="UniProtKB-UniRule"/>
</dbReference>
<dbReference type="FunFam" id="3.40.50.1260:FF:000001">
    <property type="entry name" value="Phosphoglycerate kinase"/>
    <property type="match status" value="1"/>
</dbReference>
<dbReference type="FunFam" id="3.40.50.1260:FF:000008">
    <property type="entry name" value="Phosphoglycerate kinase"/>
    <property type="match status" value="1"/>
</dbReference>
<dbReference type="Gene3D" id="2.160.20.80">
    <property type="entry name" value="E3 ubiquitin-protein ligase SopA"/>
    <property type="match status" value="1"/>
</dbReference>
<dbReference type="Gene3D" id="3.40.50.1260">
    <property type="entry name" value="Phosphoglycerate kinase, N-terminal domain"/>
    <property type="match status" value="2"/>
</dbReference>
<dbReference type="HAMAP" id="MF_00145">
    <property type="entry name" value="Phosphoglyc_kinase"/>
    <property type="match status" value="1"/>
</dbReference>
<dbReference type="InterPro" id="IPR001576">
    <property type="entry name" value="Phosphoglycerate_kinase"/>
</dbReference>
<dbReference type="InterPro" id="IPR015911">
    <property type="entry name" value="Phosphoglycerate_kinase_CS"/>
</dbReference>
<dbReference type="InterPro" id="IPR015824">
    <property type="entry name" value="Phosphoglycerate_kinase_N"/>
</dbReference>
<dbReference type="InterPro" id="IPR036043">
    <property type="entry name" value="Phosphoglycerate_kinase_sf"/>
</dbReference>
<dbReference type="PANTHER" id="PTHR11406">
    <property type="entry name" value="PHOSPHOGLYCERATE KINASE"/>
    <property type="match status" value="1"/>
</dbReference>
<dbReference type="PANTHER" id="PTHR11406:SF23">
    <property type="entry name" value="PHOSPHOGLYCERATE KINASE 1, CHLOROPLASTIC-RELATED"/>
    <property type="match status" value="1"/>
</dbReference>
<dbReference type="Pfam" id="PF00162">
    <property type="entry name" value="PGK"/>
    <property type="match status" value="1"/>
</dbReference>
<dbReference type="PRINTS" id="PR00477">
    <property type="entry name" value="PHGLYCKINASE"/>
</dbReference>
<dbReference type="SUPFAM" id="SSF141571">
    <property type="entry name" value="Pentapeptide repeat-like"/>
    <property type="match status" value="1"/>
</dbReference>
<dbReference type="SUPFAM" id="SSF53748">
    <property type="entry name" value="Phosphoglycerate kinase"/>
    <property type="match status" value="1"/>
</dbReference>
<dbReference type="PROSITE" id="PS00111">
    <property type="entry name" value="PGLYCERATE_KINASE"/>
    <property type="match status" value="1"/>
</dbReference>
<organism>
    <name type="scientific">Mycoplasmopsis pulmonis (strain UAB CTIP)</name>
    <name type="common">Mycoplasma pulmonis</name>
    <dbReference type="NCBI Taxonomy" id="272635"/>
    <lineage>
        <taxon>Bacteria</taxon>
        <taxon>Bacillati</taxon>
        <taxon>Mycoplasmatota</taxon>
        <taxon>Mycoplasmoidales</taxon>
        <taxon>Metamycoplasmataceae</taxon>
        <taxon>Mycoplasmopsis</taxon>
    </lineage>
</organism>
<accession>Q98QW4</accession>
<reference key="1">
    <citation type="journal article" date="2001" name="Nucleic Acids Res.">
        <title>The complete genome sequence of the murine respiratory pathogen Mycoplasma pulmonis.</title>
        <authorList>
            <person name="Chambaud I."/>
            <person name="Heilig R."/>
            <person name="Ferris S."/>
            <person name="Barbe V."/>
            <person name="Samson D."/>
            <person name="Galisson F."/>
            <person name="Moszer I."/>
            <person name="Dybvig K."/>
            <person name="Wroblewski H."/>
            <person name="Viari A."/>
            <person name="Rocha E.P.C."/>
            <person name="Blanchard A."/>
        </authorList>
    </citation>
    <scope>NUCLEOTIDE SEQUENCE [LARGE SCALE GENOMIC DNA]</scope>
    <source>
        <strain>UAB CTIP</strain>
    </source>
</reference>